<gene>
    <name evidence="1" type="primary">rplI</name>
    <name type="ordered locus">XCV1663</name>
</gene>
<reference key="1">
    <citation type="journal article" date="2005" name="J. Bacteriol.">
        <title>Insights into genome plasticity and pathogenicity of the plant pathogenic Bacterium Xanthomonas campestris pv. vesicatoria revealed by the complete genome sequence.</title>
        <authorList>
            <person name="Thieme F."/>
            <person name="Koebnik R."/>
            <person name="Bekel T."/>
            <person name="Berger C."/>
            <person name="Boch J."/>
            <person name="Buettner D."/>
            <person name="Caldana C."/>
            <person name="Gaigalat L."/>
            <person name="Goesmann A."/>
            <person name="Kay S."/>
            <person name="Kirchner O."/>
            <person name="Lanz C."/>
            <person name="Linke B."/>
            <person name="McHardy A.C."/>
            <person name="Meyer F."/>
            <person name="Mittenhuber G."/>
            <person name="Nies D.H."/>
            <person name="Niesbach-Kloesgen U."/>
            <person name="Patschkowski T."/>
            <person name="Rueckert C."/>
            <person name="Rupp O."/>
            <person name="Schneiker S."/>
            <person name="Schuster S.C."/>
            <person name="Vorhoelter F.J."/>
            <person name="Weber E."/>
            <person name="Puehler A."/>
            <person name="Bonas U."/>
            <person name="Bartels D."/>
            <person name="Kaiser O."/>
        </authorList>
    </citation>
    <scope>NUCLEOTIDE SEQUENCE [LARGE SCALE GENOMIC DNA]</scope>
    <source>
        <strain>85-10</strain>
    </source>
</reference>
<comment type="function">
    <text evidence="1">Binds to the 23S rRNA.</text>
</comment>
<comment type="similarity">
    <text evidence="1">Belongs to the bacterial ribosomal protein bL9 family.</text>
</comment>
<keyword id="KW-0687">Ribonucleoprotein</keyword>
<keyword id="KW-0689">Ribosomal protein</keyword>
<keyword id="KW-0694">RNA-binding</keyword>
<keyword id="KW-0699">rRNA-binding</keyword>
<evidence type="ECO:0000255" key="1">
    <source>
        <dbReference type="HAMAP-Rule" id="MF_00503"/>
    </source>
</evidence>
<evidence type="ECO:0000305" key="2"/>
<protein>
    <recommendedName>
        <fullName evidence="1">Large ribosomal subunit protein bL9</fullName>
    </recommendedName>
    <alternativeName>
        <fullName evidence="2">50S ribosomal protein L9</fullName>
    </alternativeName>
</protein>
<feature type="chain" id="PRO_0000236622" description="Large ribosomal subunit protein bL9">
    <location>
        <begin position="1"/>
        <end position="149"/>
    </location>
</feature>
<organism>
    <name type="scientific">Xanthomonas euvesicatoria pv. vesicatoria (strain 85-10)</name>
    <name type="common">Xanthomonas campestris pv. vesicatoria</name>
    <dbReference type="NCBI Taxonomy" id="316273"/>
    <lineage>
        <taxon>Bacteria</taxon>
        <taxon>Pseudomonadati</taxon>
        <taxon>Pseudomonadota</taxon>
        <taxon>Gammaproteobacteria</taxon>
        <taxon>Lysobacterales</taxon>
        <taxon>Lysobacteraceae</taxon>
        <taxon>Xanthomonas</taxon>
    </lineage>
</organism>
<dbReference type="EMBL" id="AM039952">
    <property type="protein sequence ID" value="CAJ23340.1"/>
    <property type="molecule type" value="Genomic_DNA"/>
</dbReference>
<dbReference type="RefSeq" id="WP_003485864.1">
    <property type="nucleotide sequence ID" value="NZ_CP017190.1"/>
</dbReference>
<dbReference type="SMR" id="Q3BV19"/>
<dbReference type="STRING" id="456327.BJD11_14265"/>
<dbReference type="GeneID" id="97510002"/>
<dbReference type="KEGG" id="xcv:XCV1663"/>
<dbReference type="eggNOG" id="COG0359">
    <property type="taxonomic scope" value="Bacteria"/>
</dbReference>
<dbReference type="HOGENOM" id="CLU_078938_4_1_6"/>
<dbReference type="Proteomes" id="UP000007069">
    <property type="component" value="Chromosome"/>
</dbReference>
<dbReference type="GO" id="GO:1990904">
    <property type="term" value="C:ribonucleoprotein complex"/>
    <property type="evidence" value="ECO:0007669"/>
    <property type="project" value="UniProtKB-KW"/>
</dbReference>
<dbReference type="GO" id="GO:0005840">
    <property type="term" value="C:ribosome"/>
    <property type="evidence" value="ECO:0007669"/>
    <property type="project" value="UniProtKB-KW"/>
</dbReference>
<dbReference type="GO" id="GO:0019843">
    <property type="term" value="F:rRNA binding"/>
    <property type="evidence" value="ECO:0007669"/>
    <property type="project" value="UniProtKB-UniRule"/>
</dbReference>
<dbReference type="GO" id="GO:0003735">
    <property type="term" value="F:structural constituent of ribosome"/>
    <property type="evidence" value="ECO:0007669"/>
    <property type="project" value="InterPro"/>
</dbReference>
<dbReference type="GO" id="GO:0006412">
    <property type="term" value="P:translation"/>
    <property type="evidence" value="ECO:0007669"/>
    <property type="project" value="UniProtKB-UniRule"/>
</dbReference>
<dbReference type="FunFam" id="3.10.430.100:FF:000007">
    <property type="entry name" value="50S ribosomal protein L9"/>
    <property type="match status" value="1"/>
</dbReference>
<dbReference type="FunFam" id="3.40.5.10:FF:000001">
    <property type="entry name" value="50S ribosomal protein L9"/>
    <property type="match status" value="1"/>
</dbReference>
<dbReference type="Gene3D" id="3.10.430.100">
    <property type="entry name" value="Ribosomal protein L9, C-terminal domain"/>
    <property type="match status" value="1"/>
</dbReference>
<dbReference type="Gene3D" id="3.40.5.10">
    <property type="entry name" value="Ribosomal protein L9, N-terminal domain"/>
    <property type="match status" value="1"/>
</dbReference>
<dbReference type="HAMAP" id="MF_00503">
    <property type="entry name" value="Ribosomal_bL9"/>
    <property type="match status" value="1"/>
</dbReference>
<dbReference type="InterPro" id="IPR000244">
    <property type="entry name" value="Ribosomal_bL9"/>
</dbReference>
<dbReference type="InterPro" id="IPR009027">
    <property type="entry name" value="Ribosomal_bL9/RNase_H1_N"/>
</dbReference>
<dbReference type="InterPro" id="IPR020594">
    <property type="entry name" value="Ribosomal_bL9_bac/chp"/>
</dbReference>
<dbReference type="InterPro" id="IPR020069">
    <property type="entry name" value="Ribosomal_bL9_C"/>
</dbReference>
<dbReference type="InterPro" id="IPR036791">
    <property type="entry name" value="Ribosomal_bL9_C_sf"/>
</dbReference>
<dbReference type="InterPro" id="IPR020070">
    <property type="entry name" value="Ribosomal_bL9_N"/>
</dbReference>
<dbReference type="InterPro" id="IPR036935">
    <property type="entry name" value="Ribosomal_bL9_N_sf"/>
</dbReference>
<dbReference type="NCBIfam" id="TIGR00158">
    <property type="entry name" value="L9"/>
    <property type="match status" value="1"/>
</dbReference>
<dbReference type="PANTHER" id="PTHR21368">
    <property type="entry name" value="50S RIBOSOMAL PROTEIN L9"/>
    <property type="match status" value="1"/>
</dbReference>
<dbReference type="Pfam" id="PF03948">
    <property type="entry name" value="Ribosomal_L9_C"/>
    <property type="match status" value="1"/>
</dbReference>
<dbReference type="Pfam" id="PF01281">
    <property type="entry name" value="Ribosomal_L9_N"/>
    <property type="match status" value="1"/>
</dbReference>
<dbReference type="SUPFAM" id="SSF55658">
    <property type="entry name" value="L9 N-domain-like"/>
    <property type="match status" value="1"/>
</dbReference>
<dbReference type="SUPFAM" id="SSF55653">
    <property type="entry name" value="Ribosomal protein L9 C-domain"/>
    <property type="match status" value="1"/>
</dbReference>
<dbReference type="PROSITE" id="PS00651">
    <property type="entry name" value="RIBOSOMAL_L9"/>
    <property type="match status" value="1"/>
</dbReference>
<name>RL9_XANE5</name>
<accession>Q3BV19</accession>
<sequence length="149" mass="15699">MDLILLQKVTNLGNLGDKVSVKPGYGRNFLVPQGKAVPATAANVEAFETKRAEYEAKANSILAEAQSRATKFEGASVTIGAHASTEGKLYGSVGPRDIAEAFTAAGLPLEKSEVILGEGAFRNVGEYDVVLHLHADVETTVKVIVESDA</sequence>
<proteinExistence type="inferred from homology"/>